<gene>
    <name evidence="1" type="primary">serS</name>
    <name type="ordered locus">MS1450</name>
</gene>
<keyword id="KW-0030">Aminoacyl-tRNA synthetase</keyword>
<keyword id="KW-0067">ATP-binding</keyword>
<keyword id="KW-0963">Cytoplasm</keyword>
<keyword id="KW-0436">Ligase</keyword>
<keyword id="KW-0547">Nucleotide-binding</keyword>
<keyword id="KW-0648">Protein biosynthesis</keyword>
<feature type="chain" id="PRO_0000122075" description="Serine--tRNA ligase">
    <location>
        <begin position="1"/>
        <end position="430"/>
    </location>
</feature>
<feature type="binding site" evidence="1">
    <location>
        <begin position="236"/>
        <end position="238"/>
    </location>
    <ligand>
        <name>L-serine</name>
        <dbReference type="ChEBI" id="CHEBI:33384"/>
    </ligand>
</feature>
<feature type="binding site" evidence="1">
    <location>
        <begin position="267"/>
        <end position="269"/>
    </location>
    <ligand>
        <name>ATP</name>
        <dbReference type="ChEBI" id="CHEBI:30616"/>
    </ligand>
</feature>
<feature type="binding site" evidence="1">
    <location>
        <position position="290"/>
    </location>
    <ligand>
        <name>L-serine</name>
        <dbReference type="ChEBI" id="CHEBI:33384"/>
    </ligand>
</feature>
<feature type="binding site" evidence="1">
    <location>
        <begin position="354"/>
        <end position="357"/>
    </location>
    <ligand>
        <name>ATP</name>
        <dbReference type="ChEBI" id="CHEBI:30616"/>
    </ligand>
</feature>
<feature type="binding site" evidence="1">
    <location>
        <position position="390"/>
    </location>
    <ligand>
        <name>L-serine</name>
        <dbReference type="ChEBI" id="CHEBI:33384"/>
    </ligand>
</feature>
<proteinExistence type="inferred from homology"/>
<evidence type="ECO:0000255" key="1">
    <source>
        <dbReference type="HAMAP-Rule" id="MF_00176"/>
    </source>
</evidence>
<sequence>MIDPNLLRNNLAEVAATLKLKRNFILDTKELAELEEQRKALQVETETLQAKRNARSKAVGAAKARGENIAPLLAEMDDMGHELATVKAELDEILAELNTIALTIPNLPADEVPLGKDDSENKEISRWGTPRQFDFEIKDHVTLGENLAGGIDFAAGAKLSGARFAVMKGQVAKMHRALAQFMLDLHTEQHGYTETYVPYLVNHTTLYGTGQLPKFGEDLFHTTPLEGEVPYALIPTAEVPVTNLVRDEILNTEDLPIRMTAHTPCFRSEAGSYGRDTRGLIRMHQFDKVEMVQIVDPDKSMEALEELTAHAEKVLQLLGLPYRKMLLCTGDMGFGSCKTYDLEVWVPAQDTYREISSCSNMWDFQARRMQARCRSKTDKKTRLVHTLNGSGLAVGRTLVAVLENYQNEDGSVTVPEVLRPYMGGLEVIGK</sequence>
<protein>
    <recommendedName>
        <fullName evidence="1">Serine--tRNA ligase</fullName>
        <ecNumber evidence="1">6.1.1.11</ecNumber>
    </recommendedName>
    <alternativeName>
        <fullName evidence="1">Seryl-tRNA synthetase</fullName>
        <shortName evidence="1">SerRS</shortName>
    </alternativeName>
    <alternativeName>
        <fullName evidence="1">Seryl-tRNA(Ser/Sec) synthetase</fullName>
    </alternativeName>
</protein>
<accession>Q65SK3</accession>
<dbReference type="EC" id="6.1.1.11" evidence="1"/>
<dbReference type="EMBL" id="AE016827">
    <property type="protein sequence ID" value="AAU38057.1"/>
    <property type="molecule type" value="Genomic_DNA"/>
</dbReference>
<dbReference type="RefSeq" id="WP_011200624.1">
    <property type="nucleotide sequence ID" value="NC_006300.1"/>
</dbReference>
<dbReference type="SMR" id="Q65SK3"/>
<dbReference type="STRING" id="221988.MS1450"/>
<dbReference type="KEGG" id="msu:MS1450"/>
<dbReference type="eggNOG" id="COG0172">
    <property type="taxonomic scope" value="Bacteria"/>
</dbReference>
<dbReference type="HOGENOM" id="CLU_023797_1_1_6"/>
<dbReference type="OrthoDB" id="9804647at2"/>
<dbReference type="UniPathway" id="UPA00906">
    <property type="reaction ID" value="UER00895"/>
</dbReference>
<dbReference type="Proteomes" id="UP000000607">
    <property type="component" value="Chromosome"/>
</dbReference>
<dbReference type="GO" id="GO:0005737">
    <property type="term" value="C:cytoplasm"/>
    <property type="evidence" value="ECO:0007669"/>
    <property type="project" value="UniProtKB-SubCell"/>
</dbReference>
<dbReference type="GO" id="GO:0005524">
    <property type="term" value="F:ATP binding"/>
    <property type="evidence" value="ECO:0007669"/>
    <property type="project" value="UniProtKB-UniRule"/>
</dbReference>
<dbReference type="GO" id="GO:0004828">
    <property type="term" value="F:serine-tRNA ligase activity"/>
    <property type="evidence" value="ECO:0007669"/>
    <property type="project" value="UniProtKB-UniRule"/>
</dbReference>
<dbReference type="GO" id="GO:0016260">
    <property type="term" value="P:selenocysteine biosynthetic process"/>
    <property type="evidence" value="ECO:0007669"/>
    <property type="project" value="UniProtKB-UniRule"/>
</dbReference>
<dbReference type="GO" id="GO:0006434">
    <property type="term" value="P:seryl-tRNA aminoacylation"/>
    <property type="evidence" value="ECO:0007669"/>
    <property type="project" value="UniProtKB-UniRule"/>
</dbReference>
<dbReference type="CDD" id="cd00770">
    <property type="entry name" value="SerRS_core"/>
    <property type="match status" value="1"/>
</dbReference>
<dbReference type="Gene3D" id="3.30.930.10">
    <property type="entry name" value="Bira Bifunctional Protein, Domain 2"/>
    <property type="match status" value="1"/>
</dbReference>
<dbReference type="Gene3D" id="1.10.287.40">
    <property type="entry name" value="Serine-tRNA synthetase, tRNA binding domain"/>
    <property type="match status" value="1"/>
</dbReference>
<dbReference type="HAMAP" id="MF_00176">
    <property type="entry name" value="Ser_tRNA_synth_type1"/>
    <property type="match status" value="1"/>
</dbReference>
<dbReference type="InterPro" id="IPR002314">
    <property type="entry name" value="aa-tRNA-synt_IIb"/>
</dbReference>
<dbReference type="InterPro" id="IPR006195">
    <property type="entry name" value="aa-tRNA-synth_II"/>
</dbReference>
<dbReference type="InterPro" id="IPR045864">
    <property type="entry name" value="aa-tRNA-synth_II/BPL/LPL"/>
</dbReference>
<dbReference type="InterPro" id="IPR002317">
    <property type="entry name" value="Ser-tRNA-ligase_type_1"/>
</dbReference>
<dbReference type="InterPro" id="IPR015866">
    <property type="entry name" value="Ser-tRNA-synth_1_N"/>
</dbReference>
<dbReference type="InterPro" id="IPR042103">
    <property type="entry name" value="SerRS_1_N_sf"/>
</dbReference>
<dbReference type="InterPro" id="IPR033729">
    <property type="entry name" value="SerRS_core"/>
</dbReference>
<dbReference type="InterPro" id="IPR010978">
    <property type="entry name" value="tRNA-bd_arm"/>
</dbReference>
<dbReference type="NCBIfam" id="TIGR00414">
    <property type="entry name" value="serS"/>
    <property type="match status" value="1"/>
</dbReference>
<dbReference type="PANTHER" id="PTHR43697:SF1">
    <property type="entry name" value="SERINE--TRNA LIGASE"/>
    <property type="match status" value="1"/>
</dbReference>
<dbReference type="PANTHER" id="PTHR43697">
    <property type="entry name" value="SERYL-TRNA SYNTHETASE"/>
    <property type="match status" value="1"/>
</dbReference>
<dbReference type="Pfam" id="PF02403">
    <property type="entry name" value="Seryl_tRNA_N"/>
    <property type="match status" value="1"/>
</dbReference>
<dbReference type="Pfam" id="PF00587">
    <property type="entry name" value="tRNA-synt_2b"/>
    <property type="match status" value="1"/>
</dbReference>
<dbReference type="PIRSF" id="PIRSF001529">
    <property type="entry name" value="Ser-tRNA-synth_IIa"/>
    <property type="match status" value="1"/>
</dbReference>
<dbReference type="PRINTS" id="PR00981">
    <property type="entry name" value="TRNASYNTHSER"/>
</dbReference>
<dbReference type="SUPFAM" id="SSF55681">
    <property type="entry name" value="Class II aaRS and biotin synthetases"/>
    <property type="match status" value="1"/>
</dbReference>
<dbReference type="SUPFAM" id="SSF46589">
    <property type="entry name" value="tRNA-binding arm"/>
    <property type="match status" value="1"/>
</dbReference>
<dbReference type="PROSITE" id="PS50862">
    <property type="entry name" value="AA_TRNA_LIGASE_II"/>
    <property type="match status" value="1"/>
</dbReference>
<reference key="1">
    <citation type="journal article" date="2004" name="Nat. Biotechnol.">
        <title>The genome sequence of the capnophilic rumen bacterium Mannheimia succiniciproducens.</title>
        <authorList>
            <person name="Hong S.H."/>
            <person name="Kim J.S."/>
            <person name="Lee S.Y."/>
            <person name="In Y.H."/>
            <person name="Choi S.S."/>
            <person name="Rih J.-K."/>
            <person name="Kim C.H."/>
            <person name="Jeong H."/>
            <person name="Hur C.G."/>
            <person name="Kim J.J."/>
        </authorList>
    </citation>
    <scope>NUCLEOTIDE SEQUENCE [LARGE SCALE GENOMIC DNA]</scope>
    <source>
        <strain>KCTC 0769BP / MBEL55E</strain>
    </source>
</reference>
<organism>
    <name type="scientific">Mannheimia succiniciproducens (strain KCTC 0769BP / MBEL55E)</name>
    <dbReference type="NCBI Taxonomy" id="221988"/>
    <lineage>
        <taxon>Bacteria</taxon>
        <taxon>Pseudomonadati</taxon>
        <taxon>Pseudomonadota</taxon>
        <taxon>Gammaproteobacteria</taxon>
        <taxon>Pasteurellales</taxon>
        <taxon>Pasteurellaceae</taxon>
        <taxon>Basfia</taxon>
    </lineage>
</organism>
<comment type="function">
    <text evidence="1">Catalyzes the attachment of serine to tRNA(Ser). Is also able to aminoacylate tRNA(Sec) with serine, to form the misacylated tRNA L-seryl-tRNA(Sec), which will be further converted into selenocysteinyl-tRNA(Sec).</text>
</comment>
<comment type="catalytic activity">
    <reaction evidence="1">
        <text>tRNA(Ser) + L-serine + ATP = L-seryl-tRNA(Ser) + AMP + diphosphate + H(+)</text>
        <dbReference type="Rhea" id="RHEA:12292"/>
        <dbReference type="Rhea" id="RHEA-COMP:9669"/>
        <dbReference type="Rhea" id="RHEA-COMP:9703"/>
        <dbReference type="ChEBI" id="CHEBI:15378"/>
        <dbReference type="ChEBI" id="CHEBI:30616"/>
        <dbReference type="ChEBI" id="CHEBI:33019"/>
        <dbReference type="ChEBI" id="CHEBI:33384"/>
        <dbReference type="ChEBI" id="CHEBI:78442"/>
        <dbReference type="ChEBI" id="CHEBI:78533"/>
        <dbReference type="ChEBI" id="CHEBI:456215"/>
        <dbReference type="EC" id="6.1.1.11"/>
    </reaction>
</comment>
<comment type="catalytic activity">
    <reaction evidence="1">
        <text>tRNA(Sec) + L-serine + ATP = L-seryl-tRNA(Sec) + AMP + diphosphate + H(+)</text>
        <dbReference type="Rhea" id="RHEA:42580"/>
        <dbReference type="Rhea" id="RHEA-COMP:9742"/>
        <dbReference type="Rhea" id="RHEA-COMP:10128"/>
        <dbReference type="ChEBI" id="CHEBI:15378"/>
        <dbReference type="ChEBI" id="CHEBI:30616"/>
        <dbReference type="ChEBI" id="CHEBI:33019"/>
        <dbReference type="ChEBI" id="CHEBI:33384"/>
        <dbReference type="ChEBI" id="CHEBI:78442"/>
        <dbReference type="ChEBI" id="CHEBI:78533"/>
        <dbReference type="ChEBI" id="CHEBI:456215"/>
        <dbReference type="EC" id="6.1.1.11"/>
    </reaction>
</comment>
<comment type="pathway">
    <text evidence="1">Aminoacyl-tRNA biosynthesis; selenocysteinyl-tRNA(Sec) biosynthesis; L-seryl-tRNA(Sec) from L-serine and tRNA(Sec): step 1/1.</text>
</comment>
<comment type="subunit">
    <text evidence="1">Homodimer. The tRNA molecule binds across the dimer.</text>
</comment>
<comment type="subcellular location">
    <subcellularLocation>
        <location evidence="1">Cytoplasm</location>
    </subcellularLocation>
</comment>
<comment type="domain">
    <text evidence="1">Consists of two distinct domains, a catalytic core and a N-terminal extension that is involved in tRNA binding.</text>
</comment>
<comment type="similarity">
    <text evidence="1">Belongs to the class-II aminoacyl-tRNA synthetase family. Type-1 seryl-tRNA synthetase subfamily.</text>
</comment>
<name>SYS_MANSM</name>